<feature type="chain" id="PRO_1000019059" description="1-deoxy-D-xylulose-5-phosphate synthase">
    <location>
        <begin position="1"/>
        <end position="629"/>
    </location>
</feature>
<feature type="binding site" evidence="1">
    <location>
        <position position="72"/>
    </location>
    <ligand>
        <name>thiamine diphosphate</name>
        <dbReference type="ChEBI" id="CHEBI:58937"/>
    </ligand>
</feature>
<feature type="binding site" evidence="1">
    <location>
        <begin position="113"/>
        <end position="115"/>
    </location>
    <ligand>
        <name>thiamine diphosphate</name>
        <dbReference type="ChEBI" id="CHEBI:58937"/>
    </ligand>
</feature>
<feature type="binding site" evidence="1">
    <location>
        <position position="144"/>
    </location>
    <ligand>
        <name>Mg(2+)</name>
        <dbReference type="ChEBI" id="CHEBI:18420"/>
    </ligand>
</feature>
<feature type="binding site" evidence="1">
    <location>
        <begin position="145"/>
        <end position="146"/>
    </location>
    <ligand>
        <name>thiamine diphosphate</name>
        <dbReference type="ChEBI" id="CHEBI:58937"/>
    </ligand>
</feature>
<feature type="binding site" evidence="1">
    <location>
        <position position="174"/>
    </location>
    <ligand>
        <name>Mg(2+)</name>
        <dbReference type="ChEBI" id="CHEBI:18420"/>
    </ligand>
</feature>
<feature type="binding site" evidence="1">
    <location>
        <position position="174"/>
    </location>
    <ligand>
        <name>thiamine diphosphate</name>
        <dbReference type="ChEBI" id="CHEBI:58937"/>
    </ligand>
</feature>
<feature type="binding site" evidence="1">
    <location>
        <position position="287"/>
    </location>
    <ligand>
        <name>thiamine diphosphate</name>
        <dbReference type="ChEBI" id="CHEBI:58937"/>
    </ligand>
</feature>
<feature type="binding site" evidence="1">
    <location>
        <position position="370"/>
    </location>
    <ligand>
        <name>thiamine diphosphate</name>
        <dbReference type="ChEBI" id="CHEBI:58937"/>
    </ligand>
</feature>
<keyword id="KW-0414">Isoprene biosynthesis</keyword>
<keyword id="KW-0460">Magnesium</keyword>
<keyword id="KW-0479">Metal-binding</keyword>
<keyword id="KW-0784">Thiamine biosynthesis</keyword>
<keyword id="KW-0786">Thiamine pyrophosphate</keyword>
<keyword id="KW-0808">Transferase</keyword>
<reference key="1">
    <citation type="journal article" date="2007" name="PLoS Genet.">
        <title>Patterns and implications of gene gain and loss in the evolution of Prochlorococcus.</title>
        <authorList>
            <person name="Kettler G.C."/>
            <person name="Martiny A.C."/>
            <person name="Huang K."/>
            <person name="Zucker J."/>
            <person name="Coleman M.L."/>
            <person name="Rodrigue S."/>
            <person name="Chen F."/>
            <person name="Lapidus A."/>
            <person name="Ferriera S."/>
            <person name="Johnson J."/>
            <person name="Steglich C."/>
            <person name="Church G.M."/>
            <person name="Richardson P."/>
            <person name="Chisholm S.W."/>
        </authorList>
    </citation>
    <scope>NUCLEOTIDE SEQUENCE [LARGE SCALE GENOMIC DNA]</scope>
    <source>
        <strain>AS9601</strain>
    </source>
</reference>
<organism>
    <name type="scientific">Prochlorococcus marinus (strain AS9601)</name>
    <dbReference type="NCBI Taxonomy" id="146891"/>
    <lineage>
        <taxon>Bacteria</taxon>
        <taxon>Bacillati</taxon>
        <taxon>Cyanobacteriota</taxon>
        <taxon>Cyanophyceae</taxon>
        <taxon>Synechococcales</taxon>
        <taxon>Prochlorococcaceae</taxon>
        <taxon>Prochlorococcus</taxon>
    </lineage>
</organism>
<protein>
    <recommendedName>
        <fullName evidence="1">1-deoxy-D-xylulose-5-phosphate synthase</fullName>
        <ecNumber evidence="1">2.2.1.7</ecNumber>
    </recommendedName>
    <alternativeName>
        <fullName evidence="1">1-deoxyxylulose-5-phosphate synthase</fullName>
        <shortName evidence="1">DXP synthase</shortName>
        <shortName evidence="1">DXPS</shortName>
    </alternativeName>
</protein>
<accession>A2BR27</accession>
<comment type="function">
    <text evidence="1">Catalyzes the acyloin condensation reaction between C atoms 2 and 3 of pyruvate and glyceraldehyde 3-phosphate to yield 1-deoxy-D-xylulose-5-phosphate (DXP).</text>
</comment>
<comment type="catalytic activity">
    <reaction evidence="1">
        <text>D-glyceraldehyde 3-phosphate + pyruvate + H(+) = 1-deoxy-D-xylulose 5-phosphate + CO2</text>
        <dbReference type="Rhea" id="RHEA:12605"/>
        <dbReference type="ChEBI" id="CHEBI:15361"/>
        <dbReference type="ChEBI" id="CHEBI:15378"/>
        <dbReference type="ChEBI" id="CHEBI:16526"/>
        <dbReference type="ChEBI" id="CHEBI:57792"/>
        <dbReference type="ChEBI" id="CHEBI:59776"/>
        <dbReference type="EC" id="2.2.1.7"/>
    </reaction>
</comment>
<comment type="cofactor">
    <cofactor evidence="1">
        <name>Mg(2+)</name>
        <dbReference type="ChEBI" id="CHEBI:18420"/>
    </cofactor>
    <text evidence="1">Binds 1 Mg(2+) ion per subunit.</text>
</comment>
<comment type="cofactor">
    <cofactor evidence="1">
        <name>thiamine diphosphate</name>
        <dbReference type="ChEBI" id="CHEBI:58937"/>
    </cofactor>
    <text evidence="1">Binds 1 thiamine pyrophosphate per subunit.</text>
</comment>
<comment type="pathway">
    <text evidence="1">Metabolic intermediate biosynthesis; 1-deoxy-D-xylulose 5-phosphate biosynthesis; 1-deoxy-D-xylulose 5-phosphate from D-glyceraldehyde 3-phosphate and pyruvate: step 1/1.</text>
</comment>
<comment type="subunit">
    <text evidence="1">Homodimer.</text>
</comment>
<comment type="similarity">
    <text evidence="1">Belongs to the transketolase family. DXPS subfamily.</text>
</comment>
<evidence type="ECO:0000255" key="1">
    <source>
        <dbReference type="HAMAP-Rule" id="MF_00315"/>
    </source>
</evidence>
<proteinExistence type="inferred from homology"/>
<gene>
    <name evidence="1" type="primary">dxs</name>
    <name type="ordered locus">A9601_09541</name>
</gene>
<sequence length="629" mass="68067">MLLSELSHPNQLHGLTVSQLEEIACQIRERHLQVVSTSGGHLGPGLGVVELTLALYQTLDLDFDKVVWDVGHQGYPHKLITGRFSQFDSLRQQNGVAGYLKRSESKFDHFGAGHASTSISAALGMAIARDRKGENYKCVAVIGDGALTGGMALEAINHAGHLPNTPLVVVLNDNDMSISPPVGALSSYLNKVRVSPPLQFLSDSVQESVKNIPLIGKDIPEELKNIKGSVRRLSVPKVGAVFEELGFTYMGPIEGHDIANLIKTFNAAHKLKRPVLVHVVTTKGKGYPYAEADQVGYHAQSAFDLTTGKSIPSKKPKPVSYSKIFGQTLLKICEQDSKVIGITAAMATGTGLDILQKNIPDQYIDVGIAEQHAVTLAAGMSCDGLKPVVAIYSTFLQRAFDQLIHDVGIQNLPVSFVLDRAGIVGADGPTHQGQYDISYMRSIPNFVLMAPKDESELQRMLITSINHNGPTALRIPRGSGLGVAVMDEGWEPMNIGEAEILEEGEDILIIAYGSMVASAIETAKILKNMNINACIVNARFVKPLDKNLIMPLASRIQKVVTMEEGTLIGGFGSAIVELFNDNEINIPVYRIGIPDVLVDHASPDQSKEKLGLLPDQMADKIIKKFKLVI</sequence>
<dbReference type="EC" id="2.2.1.7" evidence="1"/>
<dbReference type="EMBL" id="CP000551">
    <property type="protein sequence ID" value="ABM70238.1"/>
    <property type="molecule type" value="Genomic_DNA"/>
</dbReference>
<dbReference type="RefSeq" id="WP_011818393.1">
    <property type="nucleotide sequence ID" value="NC_008816.1"/>
</dbReference>
<dbReference type="SMR" id="A2BR27"/>
<dbReference type="STRING" id="146891.A9601_09541"/>
<dbReference type="KEGG" id="pmb:A9601_09541"/>
<dbReference type="eggNOG" id="COG1154">
    <property type="taxonomic scope" value="Bacteria"/>
</dbReference>
<dbReference type="HOGENOM" id="CLU_009227_1_4_3"/>
<dbReference type="OrthoDB" id="9803371at2"/>
<dbReference type="UniPathway" id="UPA00064">
    <property type="reaction ID" value="UER00091"/>
</dbReference>
<dbReference type="Proteomes" id="UP000002590">
    <property type="component" value="Chromosome"/>
</dbReference>
<dbReference type="GO" id="GO:0005829">
    <property type="term" value="C:cytosol"/>
    <property type="evidence" value="ECO:0007669"/>
    <property type="project" value="TreeGrafter"/>
</dbReference>
<dbReference type="GO" id="GO:0008661">
    <property type="term" value="F:1-deoxy-D-xylulose-5-phosphate synthase activity"/>
    <property type="evidence" value="ECO:0007669"/>
    <property type="project" value="UniProtKB-UniRule"/>
</dbReference>
<dbReference type="GO" id="GO:0000287">
    <property type="term" value="F:magnesium ion binding"/>
    <property type="evidence" value="ECO:0007669"/>
    <property type="project" value="UniProtKB-UniRule"/>
</dbReference>
<dbReference type="GO" id="GO:0030976">
    <property type="term" value="F:thiamine pyrophosphate binding"/>
    <property type="evidence" value="ECO:0007669"/>
    <property type="project" value="UniProtKB-UniRule"/>
</dbReference>
<dbReference type="GO" id="GO:0052865">
    <property type="term" value="P:1-deoxy-D-xylulose 5-phosphate biosynthetic process"/>
    <property type="evidence" value="ECO:0007669"/>
    <property type="project" value="UniProtKB-UniPathway"/>
</dbReference>
<dbReference type="GO" id="GO:0019288">
    <property type="term" value="P:isopentenyl diphosphate biosynthetic process, methylerythritol 4-phosphate pathway"/>
    <property type="evidence" value="ECO:0007669"/>
    <property type="project" value="TreeGrafter"/>
</dbReference>
<dbReference type="GO" id="GO:0016114">
    <property type="term" value="P:terpenoid biosynthetic process"/>
    <property type="evidence" value="ECO:0007669"/>
    <property type="project" value="UniProtKB-UniRule"/>
</dbReference>
<dbReference type="GO" id="GO:0009228">
    <property type="term" value="P:thiamine biosynthetic process"/>
    <property type="evidence" value="ECO:0007669"/>
    <property type="project" value="UniProtKB-UniRule"/>
</dbReference>
<dbReference type="CDD" id="cd02007">
    <property type="entry name" value="TPP_DXS"/>
    <property type="match status" value="1"/>
</dbReference>
<dbReference type="CDD" id="cd07033">
    <property type="entry name" value="TPP_PYR_DXS_TK_like"/>
    <property type="match status" value="1"/>
</dbReference>
<dbReference type="FunFam" id="3.40.50.920:FF:000002">
    <property type="entry name" value="1-deoxy-D-xylulose-5-phosphate synthase"/>
    <property type="match status" value="1"/>
</dbReference>
<dbReference type="FunFam" id="3.40.50.970:FF:000005">
    <property type="entry name" value="1-deoxy-D-xylulose-5-phosphate synthase"/>
    <property type="match status" value="1"/>
</dbReference>
<dbReference type="Gene3D" id="3.40.50.920">
    <property type="match status" value="1"/>
</dbReference>
<dbReference type="Gene3D" id="3.40.50.970">
    <property type="match status" value="2"/>
</dbReference>
<dbReference type="HAMAP" id="MF_00315">
    <property type="entry name" value="DXP_synth"/>
    <property type="match status" value="1"/>
</dbReference>
<dbReference type="InterPro" id="IPR005477">
    <property type="entry name" value="Dxylulose-5-P_synthase"/>
</dbReference>
<dbReference type="InterPro" id="IPR029061">
    <property type="entry name" value="THDP-binding"/>
</dbReference>
<dbReference type="InterPro" id="IPR009014">
    <property type="entry name" value="Transketo_C/PFOR_II"/>
</dbReference>
<dbReference type="InterPro" id="IPR005475">
    <property type="entry name" value="Transketolase-like_Pyr-bd"/>
</dbReference>
<dbReference type="InterPro" id="IPR020826">
    <property type="entry name" value="Transketolase_BS"/>
</dbReference>
<dbReference type="InterPro" id="IPR033248">
    <property type="entry name" value="Transketolase_C"/>
</dbReference>
<dbReference type="InterPro" id="IPR049557">
    <property type="entry name" value="Transketolase_CS"/>
</dbReference>
<dbReference type="NCBIfam" id="TIGR00204">
    <property type="entry name" value="dxs"/>
    <property type="match status" value="1"/>
</dbReference>
<dbReference type="NCBIfam" id="NF003933">
    <property type="entry name" value="PRK05444.2-2"/>
    <property type="match status" value="1"/>
</dbReference>
<dbReference type="PANTHER" id="PTHR43322">
    <property type="entry name" value="1-D-DEOXYXYLULOSE 5-PHOSPHATE SYNTHASE-RELATED"/>
    <property type="match status" value="1"/>
</dbReference>
<dbReference type="PANTHER" id="PTHR43322:SF5">
    <property type="entry name" value="1-DEOXY-D-XYLULOSE-5-PHOSPHATE SYNTHASE, CHLOROPLASTIC"/>
    <property type="match status" value="1"/>
</dbReference>
<dbReference type="Pfam" id="PF13292">
    <property type="entry name" value="DXP_synthase_N"/>
    <property type="match status" value="1"/>
</dbReference>
<dbReference type="Pfam" id="PF02779">
    <property type="entry name" value="Transket_pyr"/>
    <property type="match status" value="1"/>
</dbReference>
<dbReference type="Pfam" id="PF02780">
    <property type="entry name" value="Transketolase_C"/>
    <property type="match status" value="1"/>
</dbReference>
<dbReference type="SMART" id="SM00861">
    <property type="entry name" value="Transket_pyr"/>
    <property type="match status" value="1"/>
</dbReference>
<dbReference type="SUPFAM" id="SSF52518">
    <property type="entry name" value="Thiamin diphosphate-binding fold (THDP-binding)"/>
    <property type="match status" value="2"/>
</dbReference>
<dbReference type="SUPFAM" id="SSF52922">
    <property type="entry name" value="TK C-terminal domain-like"/>
    <property type="match status" value="1"/>
</dbReference>
<dbReference type="PROSITE" id="PS00801">
    <property type="entry name" value="TRANSKETOLASE_1"/>
    <property type="match status" value="1"/>
</dbReference>
<dbReference type="PROSITE" id="PS00802">
    <property type="entry name" value="TRANSKETOLASE_2"/>
    <property type="match status" value="1"/>
</dbReference>
<name>DXS_PROMS</name>